<feature type="chain" id="PRO_0000369230" description="Adenylyltransferase and sulfurtransferase uba4">
    <location>
        <begin position="1"/>
        <end position="483"/>
    </location>
</feature>
<feature type="domain" description="Rhodanese" evidence="3">
    <location>
        <begin position="366"/>
        <end position="481"/>
    </location>
</feature>
<feature type="active site" description="Glycyl thioester intermediate; for adenylyltransferase activity" evidence="3">
    <location>
        <position position="244"/>
    </location>
</feature>
<feature type="active site" description="Cysteine persulfide intermediate; for sulfurtransferase activity" evidence="3">
    <location>
        <position position="436"/>
    </location>
</feature>
<feature type="binding site" evidence="3">
    <location>
        <position position="100"/>
    </location>
    <ligand>
        <name>ATP</name>
        <dbReference type="ChEBI" id="CHEBI:30616"/>
    </ligand>
</feature>
<feature type="binding site" evidence="3">
    <location>
        <position position="121"/>
    </location>
    <ligand>
        <name>ATP</name>
        <dbReference type="ChEBI" id="CHEBI:30616"/>
    </ligand>
</feature>
<feature type="binding site" evidence="3">
    <location>
        <begin position="128"/>
        <end position="132"/>
    </location>
    <ligand>
        <name>ATP</name>
        <dbReference type="ChEBI" id="CHEBI:30616"/>
    </ligand>
</feature>
<feature type="binding site" evidence="3">
    <location>
        <position position="145"/>
    </location>
    <ligand>
        <name>ATP</name>
        <dbReference type="ChEBI" id="CHEBI:30616"/>
    </ligand>
</feature>
<feature type="binding site" evidence="3">
    <location>
        <begin position="178"/>
        <end position="179"/>
    </location>
    <ligand>
        <name>ATP</name>
        <dbReference type="ChEBI" id="CHEBI:30616"/>
    </ligand>
</feature>
<feature type="binding site" evidence="3">
    <location>
        <position position="227"/>
    </location>
    <ligand>
        <name>Zn(2+)</name>
        <dbReference type="ChEBI" id="CHEBI:29105"/>
    </ligand>
</feature>
<feature type="binding site" evidence="3">
    <location>
        <position position="230"/>
    </location>
    <ligand>
        <name>Zn(2+)</name>
        <dbReference type="ChEBI" id="CHEBI:29105"/>
    </ligand>
</feature>
<feature type="binding site" evidence="3">
    <location>
        <position position="306"/>
    </location>
    <ligand>
        <name>Zn(2+)</name>
        <dbReference type="ChEBI" id="CHEBI:29105"/>
    </ligand>
</feature>
<feature type="binding site" evidence="3">
    <location>
        <position position="309"/>
    </location>
    <ligand>
        <name>Zn(2+)</name>
        <dbReference type="ChEBI" id="CHEBI:29105"/>
    </ligand>
</feature>
<accession>A1DED8</accession>
<proteinExistence type="inferred from homology"/>
<gene>
    <name evidence="3" type="primary">uba4</name>
    <name evidence="3" type="synonym">cnxF</name>
    <name type="ORF">NFIA_076770</name>
</gene>
<keyword id="KW-0067">ATP-binding</keyword>
<keyword id="KW-0963">Cytoplasm</keyword>
<keyword id="KW-0479">Metal-binding</keyword>
<keyword id="KW-0501">Molybdenum cofactor biosynthesis</keyword>
<keyword id="KW-0511">Multifunctional enzyme</keyword>
<keyword id="KW-0547">Nucleotide-binding</keyword>
<keyword id="KW-0548">Nucleotidyltransferase</keyword>
<keyword id="KW-1185">Reference proteome</keyword>
<keyword id="KW-0808">Transferase</keyword>
<keyword id="KW-0819">tRNA processing</keyword>
<keyword id="KW-0833">Ubl conjugation pathway</keyword>
<keyword id="KW-0862">Zinc</keyword>
<dbReference type="EC" id="2.7.7.80" evidence="3"/>
<dbReference type="EC" id="2.8.1.11" evidence="3"/>
<dbReference type="EMBL" id="DS027696">
    <property type="protein sequence ID" value="EAW17745.1"/>
    <property type="molecule type" value="Genomic_DNA"/>
</dbReference>
<dbReference type="RefSeq" id="XP_001259642.1">
    <property type="nucleotide sequence ID" value="XM_001259641.1"/>
</dbReference>
<dbReference type="SMR" id="A1DED8"/>
<dbReference type="STRING" id="331117.A1DED8"/>
<dbReference type="EnsemblFungi" id="EAW17745">
    <property type="protein sequence ID" value="EAW17745"/>
    <property type="gene ID" value="NFIA_076770"/>
</dbReference>
<dbReference type="GeneID" id="4586050"/>
<dbReference type="KEGG" id="nfi:NFIA_076770"/>
<dbReference type="VEuPathDB" id="FungiDB:NFIA_076770"/>
<dbReference type="eggNOG" id="KOG2017">
    <property type="taxonomic scope" value="Eukaryota"/>
</dbReference>
<dbReference type="HOGENOM" id="CLU_013325_1_2_1"/>
<dbReference type="OMA" id="IPDVGMD"/>
<dbReference type="OrthoDB" id="10261062at2759"/>
<dbReference type="UniPathway" id="UPA00988"/>
<dbReference type="Proteomes" id="UP000006702">
    <property type="component" value="Unassembled WGS sequence"/>
</dbReference>
<dbReference type="GO" id="GO:0005829">
    <property type="term" value="C:cytosol"/>
    <property type="evidence" value="ECO:0007669"/>
    <property type="project" value="InterPro"/>
</dbReference>
<dbReference type="GO" id="GO:0070733">
    <property type="term" value="F:AMPylase activity"/>
    <property type="evidence" value="ECO:0007669"/>
    <property type="project" value="EnsemblFungi"/>
</dbReference>
<dbReference type="GO" id="GO:0005524">
    <property type="term" value="F:ATP binding"/>
    <property type="evidence" value="ECO:0007669"/>
    <property type="project" value="UniProtKB-KW"/>
</dbReference>
<dbReference type="GO" id="GO:0042802">
    <property type="term" value="F:identical protein binding"/>
    <property type="evidence" value="ECO:0007669"/>
    <property type="project" value="EnsemblFungi"/>
</dbReference>
<dbReference type="GO" id="GO:0046872">
    <property type="term" value="F:metal ion binding"/>
    <property type="evidence" value="ECO:0007669"/>
    <property type="project" value="UniProtKB-KW"/>
</dbReference>
<dbReference type="GO" id="GO:0061605">
    <property type="term" value="F:molybdopterin-synthase adenylyltransferase activity"/>
    <property type="evidence" value="ECO:0007669"/>
    <property type="project" value="UniProtKB-EC"/>
</dbReference>
<dbReference type="GO" id="GO:0061604">
    <property type="term" value="F:molybdopterin-synthase sulfurtransferase activity"/>
    <property type="evidence" value="ECO:0007669"/>
    <property type="project" value="UniProtKB-EC"/>
</dbReference>
<dbReference type="GO" id="GO:0004792">
    <property type="term" value="F:thiosulfate-cyanide sulfurtransferase activity"/>
    <property type="evidence" value="ECO:0007669"/>
    <property type="project" value="EnsemblFungi"/>
</dbReference>
<dbReference type="GO" id="GO:0042292">
    <property type="term" value="F:URM1 activating enzyme activity"/>
    <property type="evidence" value="ECO:0007669"/>
    <property type="project" value="EnsemblFungi"/>
</dbReference>
<dbReference type="GO" id="GO:0007114">
    <property type="term" value="P:cell budding"/>
    <property type="evidence" value="ECO:0007669"/>
    <property type="project" value="EnsemblFungi"/>
</dbReference>
<dbReference type="GO" id="GO:0034599">
    <property type="term" value="P:cellular response to oxidative stress"/>
    <property type="evidence" value="ECO:0007669"/>
    <property type="project" value="EnsemblFungi"/>
</dbReference>
<dbReference type="GO" id="GO:0001403">
    <property type="term" value="P:invasive growth in response to glucose limitation"/>
    <property type="evidence" value="ECO:0007669"/>
    <property type="project" value="EnsemblFungi"/>
</dbReference>
<dbReference type="GO" id="GO:0006777">
    <property type="term" value="P:Mo-molybdopterin cofactor biosynthetic process"/>
    <property type="evidence" value="ECO:0007669"/>
    <property type="project" value="UniProtKB-UniRule"/>
</dbReference>
<dbReference type="GO" id="GO:0032447">
    <property type="term" value="P:protein urmylation"/>
    <property type="evidence" value="ECO:0007669"/>
    <property type="project" value="EnsemblFungi"/>
</dbReference>
<dbReference type="GO" id="GO:2000220">
    <property type="term" value="P:regulation of pseudohyphal growth"/>
    <property type="evidence" value="ECO:0007669"/>
    <property type="project" value="EnsemblFungi"/>
</dbReference>
<dbReference type="GO" id="GO:0002143">
    <property type="term" value="P:tRNA wobble position uridine thiolation"/>
    <property type="evidence" value="ECO:0007669"/>
    <property type="project" value="EnsemblFungi"/>
</dbReference>
<dbReference type="CDD" id="cd00757">
    <property type="entry name" value="ThiF_MoeB_HesA_family"/>
    <property type="match status" value="1"/>
</dbReference>
<dbReference type="FunFam" id="3.40.50.720:FF:000033">
    <property type="entry name" value="Adenylyltransferase and sulfurtransferase MOCS3"/>
    <property type="match status" value="1"/>
</dbReference>
<dbReference type="FunFam" id="3.40.250.10:FF:000096">
    <property type="entry name" value="Adenylyltransferase and sulfurtransferase uba4"/>
    <property type="match status" value="1"/>
</dbReference>
<dbReference type="Gene3D" id="3.40.50.720">
    <property type="entry name" value="NAD(P)-binding Rossmann-like Domain"/>
    <property type="match status" value="1"/>
</dbReference>
<dbReference type="Gene3D" id="3.40.250.10">
    <property type="entry name" value="Rhodanese-like domain"/>
    <property type="match status" value="1"/>
</dbReference>
<dbReference type="HAMAP" id="MF_03049">
    <property type="entry name" value="MOCS3_Uba4"/>
    <property type="match status" value="1"/>
</dbReference>
<dbReference type="InterPro" id="IPR028885">
    <property type="entry name" value="MOCS3/Uba4"/>
</dbReference>
<dbReference type="InterPro" id="IPR001763">
    <property type="entry name" value="Rhodanese-like_dom"/>
</dbReference>
<dbReference type="InterPro" id="IPR036873">
    <property type="entry name" value="Rhodanese-like_dom_sf"/>
</dbReference>
<dbReference type="InterPro" id="IPR045886">
    <property type="entry name" value="ThiF/MoeB/HesA"/>
</dbReference>
<dbReference type="InterPro" id="IPR000594">
    <property type="entry name" value="ThiF_NAD_FAD-bd"/>
</dbReference>
<dbReference type="InterPro" id="IPR035985">
    <property type="entry name" value="Ubiquitin-activating_enz"/>
</dbReference>
<dbReference type="PANTHER" id="PTHR10953:SF102">
    <property type="entry name" value="ADENYLYLTRANSFERASE AND SULFURTRANSFERASE MOCS3"/>
    <property type="match status" value="1"/>
</dbReference>
<dbReference type="PANTHER" id="PTHR10953">
    <property type="entry name" value="UBIQUITIN-ACTIVATING ENZYME E1"/>
    <property type="match status" value="1"/>
</dbReference>
<dbReference type="Pfam" id="PF00581">
    <property type="entry name" value="Rhodanese"/>
    <property type="match status" value="1"/>
</dbReference>
<dbReference type="Pfam" id="PF00899">
    <property type="entry name" value="ThiF"/>
    <property type="match status" value="1"/>
</dbReference>
<dbReference type="SMART" id="SM00450">
    <property type="entry name" value="RHOD"/>
    <property type="match status" value="1"/>
</dbReference>
<dbReference type="SUPFAM" id="SSF69572">
    <property type="entry name" value="Activating enzymes of the ubiquitin-like proteins"/>
    <property type="match status" value="1"/>
</dbReference>
<dbReference type="PROSITE" id="PS50206">
    <property type="entry name" value="RHODANESE_3"/>
    <property type="match status" value="1"/>
</dbReference>
<organism>
    <name type="scientific">Neosartorya fischeri (strain ATCC 1020 / DSM 3700 / CBS 544.65 / FGSC A1164 / JCM 1740 / NRRL 181 / WB 181)</name>
    <name type="common">Aspergillus fischerianus</name>
    <dbReference type="NCBI Taxonomy" id="331117"/>
    <lineage>
        <taxon>Eukaryota</taxon>
        <taxon>Fungi</taxon>
        <taxon>Dikarya</taxon>
        <taxon>Ascomycota</taxon>
        <taxon>Pezizomycotina</taxon>
        <taxon>Eurotiomycetes</taxon>
        <taxon>Eurotiomycetidae</taxon>
        <taxon>Eurotiales</taxon>
        <taxon>Aspergillaceae</taxon>
        <taxon>Aspergillus</taxon>
        <taxon>Aspergillus subgen. Fumigati</taxon>
    </lineage>
</organism>
<comment type="function">
    <text evidence="1">Plays a central role in 2-thiolation of mcm(5)S(2)U at tRNA wobble positions of cytosolic tRNA(Lys), tRNA(Glu) and tRNA(Gln). Also essential during biosynthesis of the molybdenum cofactor. Acts by mediating the C-terminal thiocarboxylation of sulfur carriers urm1 and mocs2a. Its N-terminus first activates urm1 and mocs2a as acyl-adenylates (-COAMP), then the persulfide sulfur on the catalytic cysteine is transferred to urm1 and mocs2a to form thiocarboxylation (-COSH) of their C-terminus. The reaction probably involves hydrogen sulfide that is generated from the persulfide intermediate and that acts as a nucleophile towards urm1 and mocs2a. Subsequently, a transient disulfide bond is formed. Does not use thiosulfate as sulfur donor; nfs1 probably acting as a sulfur donor for thiocarboxylation reactions (By similarity).</text>
</comment>
<comment type="catalytic activity">
    <reaction evidence="3">
        <text>[molybdopterin-synthase sulfur-carrier protein]-C-terminal Gly-Gly + ATP + H(+) = [molybdopterin-synthase sulfur-carrier protein]-C-terminal Gly-Gly-AMP + diphosphate</text>
        <dbReference type="Rhea" id="RHEA:43616"/>
        <dbReference type="Rhea" id="RHEA-COMP:12159"/>
        <dbReference type="Rhea" id="RHEA-COMP:12202"/>
        <dbReference type="ChEBI" id="CHEBI:15378"/>
        <dbReference type="ChEBI" id="CHEBI:30616"/>
        <dbReference type="ChEBI" id="CHEBI:33019"/>
        <dbReference type="ChEBI" id="CHEBI:90618"/>
        <dbReference type="ChEBI" id="CHEBI:90778"/>
        <dbReference type="EC" id="2.7.7.80"/>
    </reaction>
</comment>
<comment type="catalytic activity">
    <reaction evidence="3">
        <text>[molybdopterin-synthase sulfur-carrier protein]-C-terminal Gly-Gly-AMP + S-sulfanyl-L-cysteinyl-[cysteine desulfurase] + AH2 = [molybdopterin-synthase sulfur-carrier protein]-C-terminal-Gly-aminoethanethioate + L-cysteinyl-[cysteine desulfurase] + A + AMP + 2 H(+)</text>
        <dbReference type="Rhea" id="RHEA:48612"/>
        <dbReference type="Rhea" id="RHEA-COMP:12157"/>
        <dbReference type="Rhea" id="RHEA-COMP:12158"/>
        <dbReference type="Rhea" id="RHEA-COMP:12159"/>
        <dbReference type="Rhea" id="RHEA-COMP:19907"/>
        <dbReference type="ChEBI" id="CHEBI:13193"/>
        <dbReference type="ChEBI" id="CHEBI:15378"/>
        <dbReference type="ChEBI" id="CHEBI:17499"/>
        <dbReference type="ChEBI" id="CHEBI:29950"/>
        <dbReference type="ChEBI" id="CHEBI:61963"/>
        <dbReference type="ChEBI" id="CHEBI:90618"/>
        <dbReference type="ChEBI" id="CHEBI:232372"/>
        <dbReference type="ChEBI" id="CHEBI:456215"/>
        <dbReference type="EC" id="2.8.1.11"/>
    </reaction>
</comment>
<comment type="cofactor">
    <cofactor evidence="3">
        <name>Zn(2+)</name>
        <dbReference type="ChEBI" id="CHEBI:29105"/>
    </cofactor>
    <text evidence="3">Binds 1 zinc ion per subunit.</text>
</comment>
<comment type="pathway">
    <text evidence="3">tRNA modification; 5-methoxycarbonylmethyl-2-thiouridine-tRNA biosynthesis.</text>
</comment>
<comment type="subcellular location">
    <subcellularLocation>
        <location evidence="2">Cytoplasm</location>
        <location evidence="2">Cytosol</location>
    </subcellularLocation>
</comment>
<comment type="similarity">
    <text evidence="3">In the N-terminal section; belongs to the HesA/MoeB/ThiF family. UBA4 subfamily.</text>
</comment>
<evidence type="ECO:0000250" key="1"/>
<evidence type="ECO:0000250" key="2">
    <source>
        <dbReference type="UniProtKB" id="P38820"/>
    </source>
</evidence>
<evidence type="ECO:0000255" key="3">
    <source>
        <dbReference type="HAMAP-Rule" id="MF_03049"/>
    </source>
</evidence>
<reference key="1">
    <citation type="journal article" date="2008" name="PLoS Genet.">
        <title>Genomic islands in the pathogenic filamentous fungus Aspergillus fumigatus.</title>
        <authorList>
            <person name="Fedorova N.D."/>
            <person name="Khaldi N."/>
            <person name="Joardar V.S."/>
            <person name="Maiti R."/>
            <person name="Amedeo P."/>
            <person name="Anderson M.J."/>
            <person name="Crabtree J."/>
            <person name="Silva J.C."/>
            <person name="Badger J.H."/>
            <person name="Albarraq A."/>
            <person name="Angiuoli S."/>
            <person name="Bussey H."/>
            <person name="Bowyer P."/>
            <person name="Cotty P.J."/>
            <person name="Dyer P.S."/>
            <person name="Egan A."/>
            <person name="Galens K."/>
            <person name="Fraser-Liggett C.M."/>
            <person name="Haas B.J."/>
            <person name="Inman J.M."/>
            <person name="Kent R."/>
            <person name="Lemieux S."/>
            <person name="Malavazi I."/>
            <person name="Orvis J."/>
            <person name="Roemer T."/>
            <person name="Ronning C.M."/>
            <person name="Sundaram J.P."/>
            <person name="Sutton G."/>
            <person name="Turner G."/>
            <person name="Venter J.C."/>
            <person name="White O.R."/>
            <person name="Whitty B.R."/>
            <person name="Youngman P."/>
            <person name="Wolfe K.H."/>
            <person name="Goldman G.H."/>
            <person name="Wortman J.R."/>
            <person name="Jiang B."/>
            <person name="Denning D.W."/>
            <person name="Nierman W.C."/>
        </authorList>
    </citation>
    <scope>NUCLEOTIDE SEQUENCE [LARGE SCALE GENOMIC DNA]</scope>
    <source>
        <strain>ATCC 1020 / DSM 3700 / CBS 544.65 / FGSC A1164 / JCM 1740 / NRRL 181 / WB 181</strain>
    </source>
</reference>
<protein>
    <recommendedName>
        <fullName evidence="3">Adenylyltransferase and sulfurtransferase uba4</fullName>
    </recommendedName>
    <alternativeName>
        <fullName evidence="3">Common component for nitrate reductase and xanthine dehydrogenase protein F</fullName>
    </alternativeName>
    <alternativeName>
        <fullName evidence="3">Ubiquitin-like protein activator 4</fullName>
    </alternativeName>
    <domain>
        <recommendedName>
            <fullName evidence="3">Molybdopterin-synthase adenylyltransferase</fullName>
            <ecNumber evidence="3">2.7.7.80</ecNumber>
        </recommendedName>
        <alternativeName>
            <fullName evidence="3">Adenylyltransferase uba4</fullName>
        </alternativeName>
        <alternativeName>
            <fullName evidence="3">Sulfur carrier protein MOCS2A adenylyltransferase</fullName>
        </alternativeName>
    </domain>
    <domain>
        <recommendedName>
            <fullName evidence="3">Molybdopterin-synthase sulfurtransferase</fullName>
            <ecNumber evidence="3">2.8.1.11</ecNumber>
        </recommendedName>
        <alternativeName>
            <fullName evidence="3">Sulfur carrier protein MOCS2A sulfurtransferase</fullName>
        </alternativeName>
        <alternativeName>
            <fullName evidence="3">Sulfurtransferase uba4</fullName>
        </alternativeName>
    </domain>
</protein>
<sequence length="483" mass="51969">MENLEQTCASLRAQIAATEAQLAGLKRELEIAEQAAADVKAQDTTITITADEGRINGTRTWPLLSEEYKRYGRQMIVPQVGLQGQLKLRSARVLIVGAGGLGCPAALYLAGAGVGTLGLVDGDTVENSNLHRQVLHRSKNVGKFKVDSAIEYLREAHLTPQEAPSIFKDYDIILDCTDNPATRYLISDTAVLLGKPLVSASALRTEGQLMVLNYPPRPVGDKSGGPCYRCVFPKPPPANSVVSCADGGILGPVVGTMGVLQALEAIKVITSPAVNPSASPPSLLIFSAYSTPPFRTIRLRARRANCAVCSADASVTLETLKIGSTDYVFFCGVAGLEATLSPEERISPLELRKRHPKEVPQDGGSISKEPTIIDVREKVQFDICNLEHSVNIPISTILSSASNAANADANAQPSLPSWLPRELASADSTNPIYVVCRHGNDSQIAVRRLKELGLDRGGQRYVGDIQGGLRAWREQIDPDWPEY</sequence>
<name>UBA4_NEOFI</name>